<comment type="function">
    <text evidence="1">Catalyzes the oxidation of 5,10-methylenetetrahydrofolate to 5,10-methenyltetrahydrofolate and then the hydrolysis of 5,10-methenyltetrahydrofolate to 10-formyltetrahydrofolate.</text>
</comment>
<comment type="catalytic activity">
    <reaction evidence="1">
        <text>(6R)-5,10-methylene-5,6,7,8-tetrahydrofolate + NADP(+) = (6R)-5,10-methenyltetrahydrofolate + NADPH</text>
        <dbReference type="Rhea" id="RHEA:22812"/>
        <dbReference type="ChEBI" id="CHEBI:15636"/>
        <dbReference type="ChEBI" id="CHEBI:57455"/>
        <dbReference type="ChEBI" id="CHEBI:57783"/>
        <dbReference type="ChEBI" id="CHEBI:58349"/>
        <dbReference type="EC" id="1.5.1.5"/>
    </reaction>
</comment>
<comment type="catalytic activity">
    <reaction evidence="1">
        <text>(6R)-5,10-methenyltetrahydrofolate + H2O = (6R)-10-formyltetrahydrofolate + H(+)</text>
        <dbReference type="Rhea" id="RHEA:23700"/>
        <dbReference type="ChEBI" id="CHEBI:15377"/>
        <dbReference type="ChEBI" id="CHEBI:15378"/>
        <dbReference type="ChEBI" id="CHEBI:57455"/>
        <dbReference type="ChEBI" id="CHEBI:195366"/>
        <dbReference type="EC" id="3.5.4.9"/>
    </reaction>
</comment>
<comment type="pathway">
    <text evidence="1">One-carbon metabolism; tetrahydrofolate interconversion.</text>
</comment>
<comment type="subunit">
    <text evidence="1">Homodimer.</text>
</comment>
<comment type="similarity">
    <text evidence="1">Belongs to the tetrahydrofolate dehydrogenase/cyclohydrolase family.</text>
</comment>
<accession>Q2N7E3</accession>
<feature type="chain" id="PRO_0000305813" description="Bifunctional protein FolD">
    <location>
        <begin position="1"/>
        <end position="298"/>
    </location>
</feature>
<feature type="binding site" evidence="1">
    <location>
        <begin position="166"/>
        <end position="168"/>
    </location>
    <ligand>
        <name>NADP(+)</name>
        <dbReference type="ChEBI" id="CHEBI:58349"/>
    </ligand>
</feature>
<feature type="binding site" evidence="1">
    <location>
        <position position="191"/>
    </location>
    <ligand>
        <name>NADP(+)</name>
        <dbReference type="ChEBI" id="CHEBI:58349"/>
    </ligand>
</feature>
<feature type="binding site" evidence="1">
    <location>
        <position position="232"/>
    </location>
    <ligand>
        <name>NADP(+)</name>
        <dbReference type="ChEBI" id="CHEBI:58349"/>
    </ligand>
</feature>
<evidence type="ECO:0000255" key="1">
    <source>
        <dbReference type="HAMAP-Rule" id="MF_01576"/>
    </source>
</evidence>
<dbReference type="EC" id="1.5.1.5" evidence="1"/>
<dbReference type="EC" id="3.5.4.9" evidence="1"/>
<dbReference type="EMBL" id="CP000157">
    <property type="protein sequence ID" value="ABC64398.1"/>
    <property type="molecule type" value="Genomic_DNA"/>
</dbReference>
<dbReference type="RefSeq" id="WP_011415221.1">
    <property type="nucleotide sequence ID" value="NC_007722.1"/>
</dbReference>
<dbReference type="SMR" id="Q2N7E3"/>
<dbReference type="STRING" id="314225.ELI_11530"/>
<dbReference type="KEGG" id="eli:ELI_11530"/>
<dbReference type="eggNOG" id="COG0190">
    <property type="taxonomic scope" value="Bacteria"/>
</dbReference>
<dbReference type="HOGENOM" id="CLU_034045_1_2_5"/>
<dbReference type="OrthoDB" id="9803580at2"/>
<dbReference type="UniPathway" id="UPA00193"/>
<dbReference type="Proteomes" id="UP000008808">
    <property type="component" value="Chromosome"/>
</dbReference>
<dbReference type="GO" id="GO:0005829">
    <property type="term" value="C:cytosol"/>
    <property type="evidence" value="ECO:0007669"/>
    <property type="project" value="TreeGrafter"/>
</dbReference>
<dbReference type="GO" id="GO:0004477">
    <property type="term" value="F:methenyltetrahydrofolate cyclohydrolase activity"/>
    <property type="evidence" value="ECO:0007669"/>
    <property type="project" value="UniProtKB-UniRule"/>
</dbReference>
<dbReference type="GO" id="GO:0004488">
    <property type="term" value="F:methylenetetrahydrofolate dehydrogenase (NADP+) activity"/>
    <property type="evidence" value="ECO:0007669"/>
    <property type="project" value="UniProtKB-UniRule"/>
</dbReference>
<dbReference type="GO" id="GO:0000105">
    <property type="term" value="P:L-histidine biosynthetic process"/>
    <property type="evidence" value="ECO:0007669"/>
    <property type="project" value="UniProtKB-KW"/>
</dbReference>
<dbReference type="GO" id="GO:0009086">
    <property type="term" value="P:methionine biosynthetic process"/>
    <property type="evidence" value="ECO:0007669"/>
    <property type="project" value="UniProtKB-KW"/>
</dbReference>
<dbReference type="GO" id="GO:0006164">
    <property type="term" value="P:purine nucleotide biosynthetic process"/>
    <property type="evidence" value="ECO:0007669"/>
    <property type="project" value="UniProtKB-KW"/>
</dbReference>
<dbReference type="GO" id="GO:0035999">
    <property type="term" value="P:tetrahydrofolate interconversion"/>
    <property type="evidence" value="ECO:0007669"/>
    <property type="project" value="UniProtKB-UniRule"/>
</dbReference>
<dbReference type="CDD" id="cd01080">
    <property type="entry name" value="NAD_bind_m-THF_DH_Cyclohyd"/>
    <property type="match status" value="1"/>
</dbReference>
<dbReference type="FunFam" id="3.40.50.720:FF:000006">
    <property type="entry name" value="Bifunctional protein FolD"/>
    <property type="match status" value="1"/>
</dbReference>
<dbReference type="FunFam" id="3.40.50.10860:FF:000005">
    <property type="entry name" value="C-1-tetrahydrofolate synthase, cytoplasmic, putative"/>
    <property type="match status" value="1"/>
</dbReference>
<dbReference type="Gene3D" id="3.40.50.10860">
    <property type="entry name" value="Leucine Dehydrogenase, chain A, domain 1"/>
    <property type="match status" value="1"/>
</dbReference>
<dbReference type="Gene3D" id="3.40.50.720">
    <property type="entry name" value="NAD(P)-binding Rossmann-like Domain"/>
    <property type="match status" value="1"/>
</dbReference>
<dbReference type="HAMAP" id="MF_01576">
    <property type="entry name" value="THF_DHG_CYH"/>
    <property type="match status" value="1"/>
</dbReference>
<dbReference type="InterPro" id="IPR046346">
    <property type="entry name" value="Aminoacid_DH-like_N_sf"/>
</dbReference>
<dbReference type="InterPro" id="IPR036291">
    <property type="entry name" value="NAD(P)-bd_dom_sf"/>
</dbReference>
<dbReference type="InterPro" id="IPR000672">
    <property type="entry name" value="THF_DH/CycHdrlase"/>
</dbReference>
<dbReference type="InterPro" id="IPR020630">
    <property type="entry name" value="THF_DH/CycHdrlase_cat_dom"/>
</dbReference>
<dbReference type="InterPro" id="IPR020867">
    <property type="entry name" value="THF_DH/CycHdrlase_CS"/>
</dbReference>
<dbReference type="InterPro" id="IPR020631">
    <property type="entry name" value="THF_DH/CycHdrlase_NAD-bd_dom"/>
</dbReference>
<dbReference type="NCBIfam" id="NF008058">
    <property type="entry name" value="PRK10792.1"/>
    <property type="match status" value="1"/>
</dbReference>
<dbReference type="NCBIfam" id="NF010783">
    <property type="entry name" value="PRK14186.1"/>
    <property type="match status" value="1"/>
</dbReference>
<dbReference type="NCBIfam" id="NF010785">
    <property type="entry name" value="PRK14188.1"/>
    <property type="match status" value="1"/>
</dbReference>
<dbReference type="PANTHER" id="PTHR48099:SF5">
    <property type="entry name" value="C-1-TETRAHYDROFOLATE SYNTHASE, CYTOPLASMIC"/>
    <property type="match status" value="1"/>
</dbReference>
<dbReference type="PANTHER" id="PTHR48099">
    <property type="entry name" value="C-1-TETRAHYDROFOLATE SYNTHASE, CYTOPLASMIC-RELATED"/>
    <property type="match status" value="1"/>
</dbReference>
<dbReference type="Pfam" id="PF00763">
    <property type="entry name" value="THF_DHG_CYH"/>
    <property type="match status" value="1"/>
</dbReference>
<dbReference type="Pfam" id="PF02882">
    <property type="entry name" value="THF_DHG_CYH_C"/>
    <property type="match status" value="1"/>
</dbReference>
<dbReference type="PRINTS" id="PR00085">
    <property type="entry name" value="THFDHDRGNASE"/>
</dbReference>
<dbReference type="SUPFAM" id="SSF53223">
    <property type="entry name" value="Aminoacid dehydrogenase-like, N-terminal domain"/>
    <property type="match status" value="1"/>
</dbReference>
<dbReference type="SUPFAM" id="SSF51735">
    <property type="entry name" value="NAD(P)-binding Rossmann-fold domains"/>
    <property type="match status" value="1"/>
</dbReference>
<dbReference type="PROSITE" id="PS00767">
    <property type="entry name" value="THF_DHG_CYH_2"/>
    <property type="match status" value="1"/>
</dbReference>
<protein>
    <recommendedName>
        <fullName evidence="1">Bifunctional protein FolD</fullName>
    </recommendedName>
    <domain>
        <recommendedName>
            <fullName evidence="1">Methylenetetrahydrofolate dehydrogenase</fullName>
            <ecNumber evidence="1">1.5.1.5</ecNumber>
        </recommendedName>
    </domain>
    <domain>
        <recommendedName>
            <fullName evidence="1">Methenyltetrahydrofolate cyclohydrolase</fullName>
            <ecNumber evidence="1">3.5.4.9</ecNumber>
        </recommendedName>
    </domain>
</protein>
<reference key="1">
    <citation type="journal article" date="2009" name="J. Bacteriol.">
        <title>Complete genome sequence of Erythrobacter litoralis HTCC2594.</title>
        <authorList>
            <person name="Oh H.M."/>
            <person name="Giovannoni S.J."/>
            <person name="Ferriera S."/>
            <person name="Johnson J."/>
            <person name="Cho J.C."/>
        </authorList>
    </citation>
    <scope>NUCLEOTIDE SEQUENCE [LARGE SCALE GENOMIC DNA]</scope>
    <source>
        <strain>HTCC2594</strain>
    </source>
</reference>
<organism>
    <name type="scientific">Erythrobacter litoralis (strain HTCC2594)</name>
    <dbReference type="NCBI Taxonomy" id="314225"/>
    <lineage>
        <taxon>Bacteria</taxon>
        <taxon>Pseudomonadati</taxon>
        <taxon>Pseudomonadota</taxon>
        <taxon>Alphaproteobacteria</taxon>
        <taxon>Sphingomonadales</taxon>
        <taxon>Erythrobacteraceae</taxon>
        <taxon>Erythrobacter/Porphyrobacter group</taxon>
        <taxon>Erythrobacter</taxon>
    </lineage>
</organism>
<sequence>MTAEIIDGKAFAARLRERVGALAEKFEAAAGRKPGLAVVLVGEDPASEVYVRNKGKATLAANMESFEYKLPADTTAQDLLALVKKLNGDPAVDGILVQLPLPDHLDEQSIIAAISPDKDVDGFHVINAGRLSVGQRGFVPCTPLGCMMLLADRLGDLSGLEAVVIGRSNIVGKPMAQLLLDANATVTIAHSRTRNLPEVVKRADIVVAAVGRAEMVKPEWLKDGATVIDVGINRLPPEPGKERGRLVGDVDFGRASEVAAAITPVPGGVGPMTIAVLLRNTLVAAHRNEGIDLPEDAI</sequence>
<gene>
    <name evidence="1" type="primary">folD</name>
    <name type="ordered locus">ELI_11530</name>
</gene>
<name>FOLD_ERYLH</name>
<keyword id="KW-0028">Amino-acid biosynthesis</keyword>
<keyword id="KW-0368">Histidine biosynthesis</keyword>
<keyword id="KW-0378">Hydrolase</keyword>
<keyword id="KW-0486">Methionine biosynthesis</keyword>
<keyword id="KW-0511">Multifunctional enzyme</keyword>
<keyword id="KW-0521">NADP</keyword>
<keyword id="KW-0554">One-carbon metabolism</keyword>
<keyword id="KW-0560">Oxidoreductase</keyword>
<keyword id="KW-0658">Purine biosynthesis</keyword>
<keyword id="KW-1185">Reference proteome</keyword>
<proteinExistence type="inferred from homology"/>